<dbReference type="EC" id="2.4.1.325" evidence="1"/>
<dbReference type="EMBL" id="BX950851">
    <property type="protein sequence ID" value="CAG77099.1"/>
    <property type="molecule type" value="Genomic_DNA"/>
</dbReference>
<dbReference type="RefSeq" id="WP_011095673.1">
    <property type="nucleotide sequence ID" value="NC_004547.2"/>
</dbReference>
<dbReference type="SMR" id="Q6CZF0"/>
<dbReference type="STRING" id="218491.ECA4202"/>
<dbReference type="CAZy" id="GT56">
    <property type="family name" value="Glycosyltransferase Family 56"/>
</dbReference>
<dbReference type="KEGG" id="eca:ECA4202"/>
<dbReference type="PATRIC" id="fig|218491.5.peg.4278"/>
<dbReference type="eggNOG" id="COG0554">
    <property type="taxonomic scope" value="Bacteria"/>
</dbReference>
<dbReference type="HOGENOM" id="CLU_066584_0_0_6"/>
<dbReference type="OrthoDB" id="6532169at2"/>
<dbReference type="UniPathway" id="UPA00566"/>
<dbReference type="Proteomes" id="UP000007966">
    <property type="component" value="Chromosome"/>
</dbReference>
<dbReference type="GO" id="GO:0005886">
    <property type="term" value="C:plasma membrane"/>
    <property type="evidence" value="ECO:0007669"/>
    <property type="project" value="UniProtKB-SubCell"/>
</dbReference>
<dbReference type="GO" id="GO:0102031">
    <property type="term" value="F:4-acetamido-4,6-dideoxy-D-galactose transferase activity"/>
    <property type="evidence" value="ECO:0007669"/>
    <property type="project" value="UniProtKB-EC"/>
</dbReference>
<dbReference type="GO" id="GO:0008417">
    <property type="term" value="F:fucosyltransferase activity"/>
    <property type="evidence" value="ECO:0007669"/>
    <property type="project" value="InterPro"/>
</dbReference>
<dbReference type="GO" id="GO:0009246">
    <property type="term" value="P:enterobacterial common antigen biosynthetic process"/>
    <property type="evidence" value="ECO:0007669"/>
    <property type="project" value="UniProtKB-UniRule"/>
</dbReference>
<dbReference type="GO" id="GO:0036065">
    <property type="term" value="P:fucosylation"/>
    <property type="evidence" value="ECO:0007669"/>
    <property type="project" value="InterPro"/>
</dbReference>
<dbReference type="HAMAP" id="MF_01002">
    <property type="entry name" value="WecF_RffT"/>
    <property type="match status" value="1"/>
</dbReference>
<dbReference type="InterPro" id="IPR009993">
    <property type="entry name" value="WecF"/>
</dbReference>
<dbReference type="NCBIfam" id="NF002753">
    <property type="entry name" value="PRK02797.1-2"/>
    <property type="match status" value="1"/>
</dbReference>
<dbReference type="Pfam" id="PF07429">
    <property type="entry name" value="Glyco_transf_56"/>
    <property type="match status" value="1"/>
</dbReference>
<name>WECF_PECAS</name>
<protein>
    <recommendedName>
        <fullName evidence="1">TDP-N-acetylfucosamine:lipid II N-acetylfucosaminyltransferase</fullName>
        <ecNumber evidence="1">2.4.1.325</ecNumber>
    </recommendedName>
    <alternativeName>
        <fullName evidence="1">4-alpha-L-fucosyltransferase</fullName>
    </alternativeName>
    <alternativeName>
        <fullName evidence="1">TDP-Fuc4NAc:lipid II Fuc4NAc transferase</fullName>
        <shortName evidence="1">Fuc4NAc transferase</shortName>
    </alternativeName>
</protein>
<comment type="function">
    <text evidence="1">Catalyzes the synthesis of Und-PP-GlcNAc-ManNAcA-Fuc4NAc (Lipid III), the third lipid-linked intermediate involved in ECA synthesis.</text>
</comment>
<comment type="catalytic activity">
    <reaction evidence="1">
        <text>beta-D-ManNAcA-(1-&gt;4)-alpha-D-GlcNAc-di-trans,octa-cis-undecaprenyl diphosphate + dTDP-4-acetamido-4,6-dideoxy-alpha-D-galactose = alpha-D-FucNAc4-(1-&gt;4)-beta-D-ManNAcA-(1-&gt;4)-D-GlcNAc-undecaprenyl diphosphate + dTDP + H(+)</text>
        <dbReference type="Rhea" id="RHEA:28759"/>
        <dbReference type="ChEBI" id="CHEBI:15378"/>
        <dbReference type="ChEBI" id="CHEBI:58369"/>
        <dbReference type="ChEBI" id="CHEBI:61495"/>
        <dbReference type="ChEBI" id="CHEBI:61496"/>
        <dbReference type="ChEBI" id="CHEBI:68493"/>
        <dbReference type="EC" id="2.4.1.325"/>
    </reaction>
</comment>
<comment type="pathway">
    <text evidence="1">Bacterial outer membrane biogenesis; enterobacterial common antigen biosynthesis.</text>
</comment>
<comment type="subcellular location">
    <subcellularLocation>
        <location evidence="1">Cell inner membrane</location>
        <topology evidence="1">Peripheral membrane protein</topology>
    </subcellularLocation>
</comment>
<comment type="similarity">
    <text evidence="1">Belongs to the glycosyltransferase 56 family.</text>
</comment>
<feature type="chain" id="PRO_0000216183" description="TDP-N-acetylfucosamine:lipid II N-acetylfucosaminyltransferase">
    <location>
        <begin position="1"/>
        <end position="361"/>
    </location>
</feature>
<gene>
    <name evidence="1" type="primary">wecF</name>
    <name evidence="1" type="synonym">rffT</name>
    <name type="ordered locus">ECA4202</name>
</gene>
<evidence type="ECO:0000255" key="1">
    <source>
        <dbReference type="HAMAP-Rule" id="MF_01002"/>
    </source>
</evidence>
<keyword id="KW-0997">Cell inner membrane</keyword>
<keyword id="KW-1003">Cell membrane</keyword>
<keyword id="KW-0328">Glycosyltransferase</keyword>
<keyword id="KW-0472">Membrane</keyword>
<keyword id="KW-1185">Reference proteome</keyword>
<keyword id="KW-0808">Transferase</keyword>
<organism>
    <name type="scientific">Pectobacterium atrosepticum (strain SCRI 1043 / ATCC BAA-672)</name>
    <name type="common">Erwinia carotovora subsp. atroseptica</name>
    <dbReference type="NCBI Taxonomy" id="218491"/>
    <lineage>
        <taxon>Bacteria</taxon>
        <taxon>Pseudomonadati</taxon>
        <taxon>Pseudomonadota</taxon>
        <taxon>Gammaproteobacteria</taxon>
        <taxon>Enterobacterales</taxon>
        <taxon>Pectobacteriaceae</taxon>
        <taxon>Pectobacterium</taxon>
    </lineage>
</organism>
<proteinExistence type="inferred from homology"/>
<reference key="1">
    <citation type="journal article" date="2004" name="Proc. Natl. Acad. Sci. U.S.A.">
        <title>Genome sequence of the enterobacterial phytopathogen Erwinia carotovora subsp. atroseptica and characterization of virulence factors.</title>
        <authorList>
            <person name="Bell K.S."/>
            <person name="Sebaihia M."/>
            <person name="Pritchard L."/>
            <person name="Holden M.T.G."/>
            <person name="Hyman L.J."/>
            <person name="Holeva M.C."/>
            <person name="Thomson N.R."/>
            <person name="Bentley S.D."/>
            <person name="Churcher L.J.C."/>
            <person name="Mungall K."/>
            <person name="Atkin R."/>
            <person name="Bason N."/>
            <person name="Brooks K."/>
            <person name="Chillingworth T."/>
            <person name="Clark K."/>
            <person name="Doggett J."/>
            <person name="Fraser A."/>
            <person name="Hance Z."/>
            <person name="Hauser H."/>
            <person name="Jagels K."/>
            <person name="Moule S."/>
            <person name="Norbertczak H."/>
            <person name="Ormond D."/>
            <person name="Price C."/>
            <person name="Quail M.A."/>
            <person name="Sanders M."/>
            <person name="Walker D."/>
            <person name="Whitehead S."/>
            <person name="Salmond G.P.C."/>
            <person name="Birch P.R.J."/>
            <person name="Parkhill J."/>
            <person name="Toth I.K."/>
        </authorList>
    </citation>
    <scope>NUCLEOTIDE SEQUENCE [LARGE SCALE GENOMIC DNA]</scope>
    <source>
        <strain>SCRI 1043 / ATCC BAA-672</strain>
    </source>
</reference>
<accession>Q6CZF0</accession>
<sequence length="361" mass="41242">MTTLIHVLGSDIPHHNQTVLRFFNDVLATELPEHQIRHFIVASHDGISPADFPALRIETCVDKKTLAEAVIARAKSNRKMRFFLHGQFNPTLWLALLSGKIKPEQVCWHVWGADLYEEANGLKYRLFYWLRRMAQKRIGHVFATRGDLAWYEQRAPRVPTSLLYFPTRMDPALTSMKVDKPLAGPMTILVGNSGDRTNRHQEALRAIHKQFGNNVRVIVPMGYPANNASYIAQVEKDGLALFGVKNFQLLKDQLAFDDYLNMLRTCDLGYFIFDRQQGIGTLCLLIQFGVPFVISRKNPFWQDLTEQSLPVLFYGDDLDEALVREAQRQLASVDKHQIAFFNPNYLQGWRDALALATGEPT</sequence>